<reference key="1">
    <citation type="journal article" date="1999" name="Plant J.">
        <title>Arabidopsis thaliana proteins related to the yeast SIP and SNF4 interact with AKINalpha1, an SNF1-like protein kinase.</title>
        <authorList>
            <person name="Bouly J.-P."/>
            <person name="Gissot L."/>
            <person name="Lessard P."/>
            <person name="Kreis M."/>
            <person name="Thomas M."/>
        </authorList>
    </citation>
    <scope>NUCLEOTIDE SEQUENCE [MRNA]</scope>
    <scope>INTERACTION WITH AKINB1; AKINB2 AND AKING1</scope>
    <scope>TISSUE SPECIFICITY</scope>
    <source>
        <strain>cv. Columbia</strain>
        <tissue>Seedling</tissue>
    </source>
</reference>
<reference key="2">
    <citation type="journal article" date="1999" name="Proc. Natl. Acad. Sci. U.S.A.">
        <title>Regulatory interaction of PRL1 WD protein with Arabidopsis SNF1-like protein kinases.</title>
        <authorList>
            <person name="Bhalerao R.P."/>
            <person name="Salchert K."/>
            <person name="Bako L."/>
            <person name="Oekresz L."/>
            <person name="Szabados L."/>
            <person name="Muranaka T."/>
            <person name="Machida Y."/>
            <person name="Schell J."/>
            <person name="Koncz C."/>
        </authorList>
    </citation>
    <scope>NUCLEOTIDE SEQUENCE [MRNA]</scope>
    <scope>FUNCTION</scope>
    <scope>INDUCTION</scope>
    <scope>AUTOPHOSPHORYLATION</scope>
    <scope>INTERACTION WITH PRL1</scope>
</reference>
<reference key="3">
    <citation type="submission" date="2006-06" db="EMBL/GenBank/DDBJ databases">
        <title>Functional differentiation of ubiquitin-interacting factors from Arabidopsis.</title>
        <authorList>
            <person name="Fu H."/>
        </authorList>
    </citation>
    <scope>NUCLEOTIDE SEQUENCE [MRNA]</scope>
    <source>
        <strain>cv. Columbia</strain>
    </source>
</reference>
<reference key="4">
    <citation type="journal article" date="2000" name="DNA Res.">
        <title>Structural analysis of Arabidopsis thaliana chromosome 3. I. Sequence features of the regions of 4,504,864 bp covered by sixty P1 and TAC clones.</title>
        <authorList>
            <person name="Sato S."/>
            <person name="Nakamura Y."/>
            <person name="Kaneko T."/>
            <person name="Katoh T."/>
            <person name="Asamizu E."/>
            <person name="Tabata S."/>
        </authorList>
    </citation>
    <scope>NUCLEOTIDE SEQUENCE [LARGE SCALE GENOMIC DNA]</scope>
    <source>
        <strain>cv. Columbia</strain>
    </source>
</reference>
<reference key="5">
    <citation type="journal article" date="2017" name="Plant J.">
        <title>Araport11: a complete reannotation of the Arabidopsis thaliana reference genome.</title>
        <authorList>
            <person name="Cheng C.Y."/>
            <person name="Krishnakumar V."/>
            <person name="Chan A.P."/>
            <person name="Thibaud-Nissen F."/>
            <person name="Schobel S."/>
            <person name="Town C.D."/>
        </authorList>
    </citation>
    <scope>GENOME REANNOTATION</scope>
    <source>
        <strain>cv. Columbia</strain>
    </source>
</reference>
<reference key="6">
    <citation type="journal article" date="2003" name="Science">
        <title>Empirical analysis of transcriptional activity in the Arabidopsis genome.</title>
        <authorList>
            <person name="Yamada K."/>
            <person name="Lim J."/>
            <person name="Dale J.M."/>
            <person name="Chen H."/>
            <person name="Shinn P."/>
            <person name="Palm C.J."/>
            <person name="Southwick A.M."/>
            <person name="Wu H.C."/>
            <person name="Kim C.J."/>
            <person name="Nguyen M."/>
            <person name="Pham P.K."/>
            <person name="Cheuk R.F."/>
            <person name="Karlin-Newmann G."/>
            <person name="Liu S.X."/>
            <person name="Lam B."/>
            <person name="Sakano H."/>
            <person name="Wu T."/>
            <person name="Yu G."/>
            <person name="Miranda M."/>
            <person name="Quach H.L."/>
            <person name="Tripp M."/>
            <person name="Chang C.H."/>
            <person name="Lee J.M."/>
            <person name="Toriumi M.J."/>
            <person name="Chan M.M."/>
            <person name="Tang C.C."/>
            <person name="Onodera C.S."/>
            <person name="Deng J.M."/>
            <person name="Akiyama K."/>
            <person name="Ansari Y."/>
            <person name="Arakawa T."/>
            <person name="Banh J."/>
            <person name="Banno F."/>
            <person name="Bowser L."/>
            <person name="Brooks S.Y."/>
            <person name="Carninci P."/>
            <person name="Chao Q."/>
            <person name="Choy N."/>
            <person name="Enju A."/>
            <person name="Goldsmith A.D."/>
            <person name="Gurjal M."/>
            <person name="Hansen N.F."/>
            <person name="Hayashizaki Y."/>
            <person name="Johnson-Hopson C."/>
            <person name="Hsuan V.W."/>
            <person name="Iida K."/>
            <person name="Karnes M."/>
            <person name="Khan S."/>
            <person name="Koesema E."/>
            <person name="Ishida J."/>
            <person name="Jiang P.X."/>
            <person name="Jones T."/>
            <person name="Kawai J."/>
            <person name="Kamiya A."/>
            <person name="Meyers C."/>
            <person name="Nakajima M."/>
            <person name="Narusaka M."/>
            <person name="Seki M."/>
            <person name="Sakurai T."/>
            <person name="Satou M."/>
            <person name="Tamse R."/>
            <person name="Vaysberg M."/>
            <person name="Wallender E.K."/>
            <person name="Wong C."/>
            <person name="Yamamura Y."/>
            <person name="Yuan S."/>
            <person name="Shinozaki K."/>
            <person name="Davis R.W."/>
            <person name="Theologis A."/>
            <person name="Ecker J.R."/>
        </authorList>
    </citation>
    <scope>NUCLEOTIDE SEQUENCE [LARGE SCALE MRNA]</scope>
    <source>
        <strain>cv. Columbia</strain>
    </source>
</reference>
<reference key="7">
    <citation type="journal article" date="2000" name="Plant J.">
        <title>Functional identification of an Arabidopsis Snf4 ortholog by screening for heterologous multicopy suppressors of snf4 deficiency in yeast.</title>
        <authorList>
            <person name="Kleinow T."/>
            <person name="Bhalerao R."/>
            <person name="Breuer F."/>
            <person name="Umeda M."/>
            <person name="Salchert K."/>
            <person name="Koncz C."/>
        </authorList>
    </citation>
    <scope>INTERACTION WITH SNF4</scope>
</reference>
<reference key="8">
    <citation type="journal article" date="2001" name="EMBO J.">
        <title>SKP1-SnRK protein kinase interactions mediate proteasomal binding of a plant SCF ubiquitin ligase.</title>
        <authorList>
            <person name="Farras R."/>
            <person name="Ferrando A."/>
            <person name="Jasik J."/>
            <person name="Kleinow T."/>
            <person name="Oekresz L."/>
            <person name="Tiburcio A."/>
            <person name="Salchert K."/>
            <person name="del Pozo C."/>
            <person name="Schell J."/>
            <person name="Koncz C."/>
        </authorList>
    </citation>
    <scope>FUNCTION</scope>
    <scope>INTERACTION WITH SKP1 AND PAD1</scope>
</reference>
<reference key="9">
    <citation type="journal article" date="2001" name="Nucleic Acids Res.">
        <title>Detection of in vivo protein interactions between Snf1-related kinase subunits with intron-tagged epitope-labelling in plants cells.</title>
        <authorList>
            <person name="Ferrando A."/>
            <person name="Koncz-Kalman Z."/>
            <person name="Farras R."/>
            <person name="Tiburcio A."/>
            <person name="Schell J."/>
            <person name="Koncz C."/>
        </authorList>
    </citation>
    <scope>INTERACTION WITH KINB2</scope>
</reference>
<reference key="10">
    <citation type="journal article" date="2002" name="Plant J.">
        <title>A novel higher plant protein tyrosine phosphatase interacts with SNF1-related protein kinases via a KIS (kinase interaction sequence) domain.</title>
        <authorList>
            <person name="Fordham-Skelton A.P."/>
            <person name="Chilley P."/>
            <person name="Lumbreras V."/>
            <person name="Reignoux S."/>
            <person name="Fenton T.R."/>
            <person name="Dahm C.C."/>
            <person name="Pages M."/>
            <person name="Gatehouse J.A."/>
        </authorList>
    </citation>
    <scope>INTERACTION WITH DSP4</scope>
</reference>
<reference key="11">
    <citation type="journal article" date="2003" name="Plant Cell">
        <title>Geminivirus AL2 and L2 proteins interact with and inactivate SNF1 kinase.</title>
        <authorList>
            <person name="Hao L."/>
            <person name="Wang H."/>
            <person name="Sunter G."/>
            <person name="Bisaro D.M."/>
        </authorList>
    </citation>
    <scope>FUNCTION</scope>
    <scope>INTERACTION WITH TOMATO GOLDEN MOSAIC VIRUS AL2 AND BEET CURLY TOP VIRUS L2</scope>
    <scope>ACTIVITY REGULATION</scope>
</reference>
<reference key="12">
    <citation type="journal article" date="2003" name="Plant Physiol.">
        <title>The Arabidopsis CDPK-SnRK superfamily of protein kinases.</title>
        <authorList>
            <person name="Hrabak E.M."/>
            <person name="Chan C.W.M."/>
            <person name="Gribskov M."/>
            <person name="Harper J.F."/>
            <person name="Choi J.H."/>
            <person name="Halford N."/>
            <person name="Kudla J."/>
            <person name="Luan S."/>
            <person name="Nimmo H.G."/>
            <person name="Sussman M.R."/>
            <person name="Thomas M."/>
            <person name="Walker-Simmons K."/>
            <person name="Zhu J.-K."/>
            <person name="Harmon A.C."/>
        </authorList>
    </citation>
    <scope>GENE FAMILY</scope>
    <scope>NOMENCLATURE</scope>
</reference>
<reference key="13">
    <citation type="journal article" date="2004" name="Plant Mol. Biol.">
        <title>AKINbeta3, a plant specific SnRK1 protein, is lacking domains present in yeast and mammals non-catalytic beta-subunits.</title>
        <authorList>
            <person name="Gissot L."/>
            <person name="Polge C."/>
            <person name="Bouly J.P."/>
            <person name="Lemaitre T."/>
            <person name="Kreis M."/>
            <person name="Thomas M."/>
        </authorList>
    </citation>
    <scope>INTERACTION WITH KINB3</scope>
</reference>
<reference key="14">
    <citation type="journal article" date="2006" name="Plant Physiol.">
        <title>AKINbetagamma contributes to SnRK1 heterotrimeric complexes and interacts with two proteins implicated in plant pathogen resistance through its KIS/GBD sequence.</title>
        <authorList>
            <person name="Gissot L."/>
            <person name="Polge C."/>
            <person name="Jossier M."/>
            <person name="Girin T."/>
            <person name="Bouly J.-P."/>
            <person name="Kreis M."/>
            <person name="Thomas M."/>
        </authorList>
    </citation>
    <scope>INTERACTION WITH SNF4</scope>
    <scope>COMPONENT OF A HETEROTRIMERIC COMPLEX</scope>
    <scope>SUBUNIT</scope>
</reference>
<reference key="15">
    <citation type="journal article" date="2007" name="Nature">
        <title>A central integrator of transcription networks in plant stress and energy signalling.</title>
        <authorList>
            <person name="Baena-Gonzalez E."/>
            <person name="Rolland F."/>
            <person name="Thevelein J.M."/>
            <person name="Sheen J."/>
        </authorList>
    </citation>
    <scope>FUNCTION</scope>
    <scope>MUTAGENESIS OF LYS-49</scope>
</reference>
<reference key="16">
    <citation type="journal article" date="2007" name="Trends Plant Sci.">
        <title>SNF1/AMPK/SnRK1 kinases, global regulators at the heart of energy control?</title>
        <authorList>
            <person name="Polge C."/>
            <person name="Thomas M."/>
        </authorList>
    </citation>
    <scope>REVIEW</scope>
</reference>
<reference key="17">
    <citation type="journal article" date="2009" name="Plant Physiol.">
        <title>Inhibition of SNF1-related protein kinase1 activity and regulation of metabolic pathways by trehalose-6-phosphate.</title>
        <authorList>
            <person name="Zhang Y."/>
            <person name="Primavesi L.F."/>
            <person name="Jhurreea D."/>
            <person name="Andralojc P.J."/>
            <person name="Mitchell R.A."/>
            <person name="Powers S.J."/>
            <person name="Schluepmann H."/>
            <person name="Delatte T."/>
            <person name="Wingler A."/>
            <person name="Paul M.J."/>
        </authorList>
    </citation>
    <scope>ACTIVITY REGULATION</scope>
</reference>
<reference key="18">
    <citation type="journal article" date="2009" name="Plant Physiol.">
        <title>SnRK1 isoforms AKIN10 and AKIN11 are differentially regulated in Arabidopsis plants under phosphate starvation.</title>
        <authorList>
            <person name="Fragoso S."/>
            <person name="Espindola L."/>
            <person name="Paez-Valencia J."/>
            <person name="Gamboa A."/>
            <person name="Camacho Y."/>
            <person name="Martinez-Barajas E."/>
            <person name="Coello P."/>
        </authorList>
    </citation>
    <scope>SUBCELLULAR LOCATION</scope>
    <scope>INDUCTION</scope>
</reference>
<reference key="19">
    <citation type="journal article" date="2009" name="Plant Physiol.">
        <title>Arabidopsis protein kinases GRIK1 and GRIK2 specifically activate SnRK1 by phosphorylating its activation loop.</title>
        <authorList>
            <person name="Shen W."/>
            <person name="Reyes M.I."/>
            <person name="Hanley-Bowdoin L."/>
        </authorList>
    </citation>
    <scope>PHOSPHORYLATION AT THR-176</scope>
    <scope>ACTIVITY REGULATION</scope>
</reference>
<reference key="20">
    <citation type="journal article" date="2009" name="Plant Sci.">
        <title>NAC domain transcription factor ATAF1 interacts with SNF1-related kinases and silencing of its subfamily causes severe developmental defects in Arabidopsis.</title>
        <authorList>
            <person name="Kleinow T."/>
            <person name="Himbert S."/>
            <person name="Krenz B."/>
            <person name="Jeske H."/>
            <person name="Koncz C."/>
        </authorList>
    </citation>
    <scope>INTERACTION WITH ATAF1</scope>
</reference>
<reference key="21">
    <citation type="journal article" date="2010" name="Plant Signal. Behav.">
        <title>beta-aminobutyric acid priming by stress imprinting.</title>
        <authorList>
            <person name="Singh P."/>
            <person name="Wu C.C."/>
            <person name="Zimmerli L."/>
        </authorList>
    </citation>
    <scope>INDUCTION BY BABA</scope>
</reference>
<reference key="22">
    <citation type="journal article" date="2014" name="Biochem. Biophys. Res. Commun.">
        <title>Arabidopsis CIPK14 positively regulates glucose response.</title>
        <authorList>
            <person name="Yan J."/>
            <person name="Niu F."/>
            <person name="Liu W.Z."/>
            <person name="Zhang H."/>
            <person name="Wang B."/>
            <person name="Lan W."/>
            <person name="Che Y."/>
            <person name="Yang B."/>
            <person name="Luan S."/>
            <person name="Jiang Y.Q."/>
        </authorList>
    </citation>
    <scope>INTERACTION WITH CIPK14</scope>
</reference>
<reference key="23">
    <citation type="journal article" date="2014" name="J. Plant Biol.">
        <title>Master regulators in plant glucose signaling networks.</title>
        <authorList>
            <person name="Sheen J."/>
        </authorList>
    </citation>
    <scope>REVIEW</scope>
</reference>
<reference key="24">
    <citation type="journal article" date="2014" name="Front. Plant Sci.">
        <title>The complex becomes more complex: protein-protein interactions of SnRK1 with DUF581 family proteins provide a framework for cell- and stimulus type-specific SnRK1 signaling in plants.</title>
        <authorList>
            <person name="Nietzsche M."/>
            <person name="Schiessl I."/>
            <person name="Boernke F."/>
        </authorList>
    </citation>
    <scope>INTERACTION WITH FLZ PROTEINS</scope>
    <scope>INTERACTION WITH GEBP</scope>
</reference>
<reference key="25">
    <citation type="journal article" date="2014" name="Front. Plant Sci.">
        <title>Corrigendum: The complex becomes more complex: protein-protein interactions of SnRK1 with DUF581 family proteins provide a framework for cell- and stimulus type-specific SnRK1 signaling in plants.</title>
        <authorList>
            <person name="Boernke F."/>
        </authorList>
    </citation>
    <scope>ERRATUM OF PUBMED:24600465</scope>
</reference>
<reference key="26">
    <citation type="journal article" date="2014" name="Front. Plant Sci.">
        <title>Regulation of sucrose non-fermenting related kinase 1 genes in Arabidopsis thaliana.</title>
        <authorList>
            <person name="Williams S.P."/>
            <person name="Rangarajan P."/>
            <person name="Donahue J.L."/>
            <person name="Hess J.E."/>
            <person name="Gillaspy G.E."/>
        </authorList>
    </citation>
    <scope>TISSUE SPECIFICITY</scope>
    <scope>INDUCTION BY TREHALOSE</scope>
    <scope>SUBCELLULAR LOCATION</scope>
</reference>
<reference key="27">
    <citation type="journal article" date="2014" name="Plant Pathol. J.">
        <title>Arabidopsis thaliana remorins interact with SnRK1 and play a role in susceptibility to Beet Curly Top Virus and Beet Severe Curly Top Virus.</title>
        <authorList>
            <person name="Son S."/>
            <person name="Oh C.J."/>
            <person name="An C.S."/>
        </authorList>
    </citation>
    <scope>INTERACTION WITH REM4.1 AND REM4.2</scope>
    <scope>FUNCTION</scope>
</reference>
<reference key="28">
    <citation type="journal article" date="2014" name="PLoS ONE">
        <title>A complex containing SNF1-related kinase (SnRK1) and adenosine kinase in Arabidopsis.</title>
        <authorList>
            <person name="Mohannath G."/>
            <person name="Jackel J.N."/>
            <person name="Lee Y.H."/>
            <person name="Buchmann R.C."/>
            <person name="Wang H."/>
            <person name="Patil V."/>
            <person name="Adams A.K."/>
            <person name="Bisaro D.M."/>
        </authorList>
    </citation>
    <scope>INTERACTION WITH ADK2</scope>
    <scope>FUNCTION</scope>
    <scope>SUBCELLULAR LOCATION</scope>
</reference>
<reference key="29">
    <citation type="journal article" date="2015" name="BMC Plant Biol.">
        <title>AKIN10 delays flowering by inactivating IDD8 transcription factor through protein phosphorylation in Arabidopsis.</title>
        <authorList>
            <person name="Jeong E.-Y."/>
            <person name="Seo P.J."/>
            <person name="Woo J.C."/>
            <person name="Park C.-M."/>
        </authorList>
    </citation>
    <scope>INTERACTION WITH IDD8</scope>
</reference>
<reference key="30">
    <citation type="journal article" date="2015" name="Elife">
        <title>SnRK1-triggered switch of bZIP63 dimerization mediates the low-energy response in plants.</title>
        <authorList>
            <person name="Mair A."/>
            <person name="Pedrotti L."/>
            <person name="Wurzinger B."/>
            <person name="Anrather D."/>
            <person name="Simeunovic A."/>
            <person name="Weiste C."/>
            <person name="Valerio C."/>
            <person name="Dietrich K."/>
            <person name="Kirchler T."/>
            <person name="Naegele T."/>
            <person name="Vicente Carbajosa J."/>
            <person name="Hanson J."/>
            <person name="Baena-Gonzalez E."/>
            <person name="Chaban C."/>
            <person name="Weckwerth W."/>
            <person name="Droege-Laser W."/>
            <person name="Teige M."/>
        </authorList>
    </citation>
    <scope>IDENTIFICATION BY MASS SPECTROMETRY</scope>
</reference>
<reference key="31">
    <citation type="journal article" date="2015" name="Plant J.">
        <title>SnRK1 from Arabidopsis thaliana is an atypical AMPK.</title>
        <authorList>
            <person name="Emanuelle S."/>
            <person name="Hossain M.I."/>
            <person name="Moller I.E."/>
            <person name="Pedersen H.L."/>
            <person name="van de Meene A.M."/>
            <person name="Doblin M.S."/>
            <person name="Koay A."/>
            <person name="Oakhill J.S."/>
            <person name="Scott J.W."/>
            <person name="Willats W.G."/>
            <person name="Kemp B.E."/>
            <person name="Bacic A."/>
            <person name="Gooley P.R."/>
            <person name="Stapleton D.I."/>
        </authorList>
    </citation>
    <scope>COMPONENT OF A HETEROTRIMERIC COMPLEX</scope>
    <scope>SUBUNIT</scope>
</reference>
<reference key="32">
    <citation type="journal article" date="2016" name="Curr. Plant Biol.">
        <title>A protein-protein interaction network linking the energy-sensor kinase SnRK1 to multiple signaling pathways in Arabidopsis thaliana.</title>
        <authorList>
            <person name="Nietzsche M."/>
            <person name="Landgraf R."/>
            <person name="Tohge T."/>
            <person name="Boernke F."/>
        </authorList>
    </citation>
    <scope>INTERACTION WITH FLZ3; FLZ9; TCP3; TCP13; HB21 AND HB23</scope>
</reference>
<reference key="33">
    <citation type="journal article" date="2016" name="EXS">
        <title>Plant SnRK1 kinases: structure, regulation, and function.</title>
        <authorList>
            <person name="Margalha L."/>
            <person name="Valerio C."/>
            <person name="Baena-Gonzalez E."/>
        </authorList>
    </citation>
    <scope>REVIEW</scope>
</reference>
<reference key="34">
    <citation type="journal article" date="2016" name="J. Exp. Bot.">
        <title>Quantitative phosphoproteomics of protein kinase SnRK1 regulated protein phosphorylation in Arabidopsis under submergence.</title>
        <authorList>
            <person name="Cho H.Y."/>
            <person name="Wen T.N."/>
            <person name="Wang Y.T."/>
            <person name="Shih M.C."/>
        </authorList>
    </citation>
    <scope>PHOSPHORYLATION AT THR-176</scope>
</reference>
<reference key="35">
    <citation type="journal article" date="2016" name="Plant J.">
        <title>SUMOylation represses SnRK1 signaling in Arabidopsis.</title>
        <authorList>
            <person name="Crozet P."/>
            <person name="Margalha L."/>
            <person name="Butowt R."/>
            <person name="Fernandes N."/>
            <person name="Elias C.A."/>
            <person name="Orosa B."/>
            <person name="Tomanov K."/>
            <person name="Teige M."/>
            <person name="Bachmair A."/>
            <person name="Sadanandom A."/>
            <person name="Baena-Gonzalez E."/>
        </authorList>
    </citation>
    <scope>SUMOYLATION</scope>
</reference>
<reference key="36">
    <citation type="journal article" date="2016" name="Plant Physiol. Biochem.">
        <title>Metabolomic analysis reveals the relationship between AZI1 and sugar signaling in systemic acquired resistance of Arabidopsis.</title>
        <authorList>
            <person name="Wang X.Y."/>
            <person name="Li D.Z."/>
            <person name="Li Q."/>
            <person name="Ma Y.Q."/>
            <person name="Yao J.W."/>
            <person name="Huang X."/>
            <person name="Xu Z.Q."/>
        </authorList>
    </citation>
    <scope>INDUCTION BY BACTERIAL PATHOGEN</scope>
</reference>
<reference key="37">
    <citation type="journal article" date="2016" name="Sci. Rep.">
        <title>Quantitative phosphoproteomics reveals the role of the AMPK plant ortholog SnRK1 as a metabolic master regulator under energy deprivation.</title>
        <authorList>
            <person name="Nukarinen E."/>
            <person name="Naegele T."/>
            <person name="Pedrotti L."/>
            <person name="Wurzinger B."/>
            <person name="Mair A."/>
            <person name="Landgraf R."/>
            <person name="Boernke F."/>
            <person name="Hanson J."/>
            <person name="Teige M."/>
            <person name="Baena-Gonzalez E."/>
            <person name="Droege-Laser W."/>
            <person name="Weckwerth W."/>
        </authorList>
    </citation>
    <scope>IDENTIFICATION BY MASS SPECTROMETRY</scope>
    <scope>PHOSPHORYLATION AT THR-176</scope>
</reference>
<reference key="38">
    <citation type="journal article" date="2016" name="Trends Plant Sci.">
        <title>The SnRK1 energy sensor in plant biotic interactions.</title>
        <authorList>
            <person name="Hulsmans S."/>
            <person name="Rodriguez M."/>
            <person name="De Coninck B."/>
            <person name="Rolland F."/>
        </authorList>
    </citation>
    <scope>REVIEW</scope>
</reference>
<reference key="39">
    <citation type="journal article" date="2017" name="J. Exp. Bot.">
        <title>SnRK1 phosphorylation of FUSCA3 positively regulates embryogenesis, seed yield, and plant growth at high temperature in Arabidopsis.</title>
        <authorList>
            <person name="Chan A."/>
            <person name="Carianopol C."/>
            <person name="Tsai A.Y."/>
            <person name="Varathanajah K."/>
            <person name="Chiu R.S."/>
            <person name="Gazzarrini S."/>
        </authorList>
    </citation>
    <scope>DISRUPTION PHENOTYPE</scope>
</reference>
<reference key="40">
    <citation type="journal article" date="2017" name="Plant Cell">
        <title>Phosphorylation of WRINKLED1 by KIN10 results in its proteasomal degradation, providing a link between energy homeostasis and lipid biosynthesis.</title>
        <authorList>
            <person name="Zhai Z."/>
            <person name="Liu H."/>
            <person name="Shanklin J."/>
        </authorList>
    </citation>
    <scope>INTERACTION WITH WRI1</scope>
</reference>
<reference key="41">
    <citation type="journal article" date="2018" name="J. Biol. Chem.">
        <title>The FCS-like zinc finger scaffold of the kinase SnRK1 is formed by the coordinated actions of the FLZ domain and intrinsically disordered regions.</title>
        <authorList>
            <person name="Jamsheer K M."/>
            <person name="Shukla B.N."/>
            <person name="Jindal S."/>
            <person name="Gopan N."/>
            <person name="Mannully C.T."/>
            <person name="Laxmi A."/>
        </authorList>
    </citation>
    <scope>INTERACTION WITH FLZ PROTEINS</scope>
</reference>
<reference key="42">
    <citation type="journal article" date="2018" name="Plant Cell Physiol.">
        <title>The role of Arabidopsis inositol polyphosphate kinase AtIPK2beta in glucose suppression of seed germination and seedling development.</title>
        <authorList>
            <person name="Yang Q."/>
            <person name="Sang S."/>
            <person name="Chen Y."/>
            <person name="Wei Z."/>
            <person name="Wang P."/>
        </authorList>
    </citation>
    <scope>INTERACTION WITH IPK2B</scope>
</reference>
<reference key="43">
    <citation type="journal article" date="2018" name="Plant J.">
        <title>FCS-like zinc finger 6 and 10 repress SnRK1 signalling in Arabidopsis.</title>
        <authorList>
            <person name="Jamsheer K M."/>
            <person name="Sharma M."/>
            <person name="Singh D."/>
            <person name="Mannully C.T."/>
            <person name="Jindal S."/>
            <person name="Shukla B.N."/>
            <person name="Laxmi A."/>
        </authorList>
    </citation>
    <scope>INTERACTION WITH FLZ6 AND FLZ10</scope>
    <scope>SUBCELLULAR LOCATION</scope>
</reference>
<reference key="44">
    <citation type="journal article" date="2018" name="Plant Physiol.">
        <title>STOREKEEPER RELATED1/G-element binding protein (STKR1) interacts with protein kinase SnRK1.</title>
        <authorList>
            <person name="Nietzsche M."/>
            <person name="Guerra T."/>
            <person name="Alseekh S."/>
            <person name="Wiermer M."/>
            <person name="Sonnewald S."/>
            <person name="Fernie A.R."/>
            <person name="Boernke F."/>
        </authorList>
    </citation>
    <scope>INTERACTION WITH GEBP</scope>
</reference>
<accession>P92958</accession>
<accession>A6XGQ9</accession>
<accession>P92968</accession>
<accession>Q3E7R4</accession>
<name>KIN11_ARATH</name>
<protein>
    <recommendedName>
        <fullName evidence="41">SNF1-related protein kinase catalytic subunit alpha KIN11</fullName>
        <shortName evidence="45">AKIN11</shortName>
        <ecNumber evidence="7 16">2.7.11.1</ecNumber>
    </recommendedName>
    <alternativeName>
        <fullName>AKIN alpha-1</fullName>
        <shortName>AKINalpha1</shortName>
    </alternativeName>
    <alternativeName>
        <fullName evidence="40">SNF1-related kinase 1.2</fullName>
        <shortName evidence="40">SnRK1.2</shortName>
    </alternativeName>
</protein>
<keyword id="KW-0025">Alternative splicing</keyword>
<keyword id="KW-0930">Antiviral protein</keyword>
<keyword id="KW-0067">ATP-binding</keyword>
<keyword id="KW-0119">Carbohydrate metabolism</keyword>
<keyword id="KW-0150">Chloroplast</keyword>
<keyword id="KW-0963">Cytoplasm</keyword>
<keyword id="KW-0256">Endoplasmic reticulum</keyword>
<keyword id="KW-0275">Fatty acid biosynthesis</keyword>
<keyword id="KW-0276">Fatty acid metabolism</keyword>
<keyword id="KW-0945">Host-virus interaction</keyword>
<keyword id="KW-0418">Kinase</keyword>
<keyword id="KW-0444">Lipid biosynthesis</keyword>
<keyword id="KW-0443">Lipid metabolism</keyword>
<keyword id="KW-0534">Nitrate assimilation</keyword>
<keyword id="KW-0547">Nucleotide-binding</keyword>
<keyword id="KW-0597">Phosphoprotein</keyword>
<keyword id="KW-0934">Plastid</keyword>
<keyword id="KW-1185">Reference proteome</keyword>
<keyword id="KW-0723">Serine/threonine-protein kinase</keyword>
<keyword id="KW-0808">Transferase</keyword>
<keyword id="KW-0832">Ubl conjugation</keyword>
<keyword id="KW-0833">Ubl conjugation pathway</keyword>
<sequence>MDHSSNRFGNNGVESILPNYKLGKTLGIGSFGKVKIAEHVVTGHKVAIKILNRRKIKNMEMEEKVRREIKILRLFMHPHIIRQYEVIETTSDIYVVMEYVKSGELFDYIVEKGRLQEDEARNFFQQIISGVEYCHRNMVVHRDLKPENLLLDSRCNIKIADFGLSNVMRDGHFLKTSCGSPNYAAPEVISGKLYAGPEVDVWSCGVILYALLCGTLPFDDENIPNLFKKIKGGIYTLPSHLSSEARDLIPRMLIVDPVKRITIPEIRQHRWFQTHLPRYLAVSPPDTVEQAKKINEEIVQEVVNMGFDRNQVLESLRNRTQNDATVTYYLLLDNRFRVPSGYLESEFQETTDSGSNPMRTPEAGASPVGHWIPAHVDHYGLGARSQVPVDRKWALGLQSHAHPREIMNEVLKALQELNVCWKKIGHYNMKCRWVPGLADGQNTMVNNQLHFRDESSIIEDDCAMTSPTVIKFELQLYKAREEKYLLDIQRVNGPQFLFLDLCAAFLTELRVI</sequence>
<comment type="function">
    <text evidence="7 10 13 16 21 25">Catalytic subunit of the probable trimeric SNF1-related protein kinase (SnRK) complex, a central regulator of cellular energy homeostasis, which, in response to seemingly unrelated darkness, sugar and stress conditions, activates energy-producing pathways and inhibits energy-consuming processes. May play a role in a signal transduction cascade regulating gene expression and carbohydrate metabolism in higher plants. The SnRK complex may also be involved in the regulation of fatty acid synthesis by phosphorylation of acetyl-CoA carboxylase and in assimilation of nitrogen by phosphorylating nitrate reductase (PubMed:17671505). In vitro, KIN11 exhibits kinase activity on sucrose phosphate synthase and the kinase activity is inhibited by PRL1 (PubMed:10220464). May be a subunit of a SCF ubiquitin ligase complex and thus be involved in proteasomal ubiquitination (PubMed:11387208). Involved in innate antiviral defenses (PubMed:12671096). Phosphorylates REM4.1 in vitro (PubMed:25289013). Phosphorylates ADK2 in vitro (PubMed:24498147).</text>
</comment>
<comment type="catalytic activity">
    <reaction evidence="7 16">
        <text>L-seryl-[protein] + ATP = O-phospho-L-seryl-[protein] + ADP + H(+)</text>
        <dbReference type="Rhea" id="RHEA:17989"/>
        <dbReference type="Rhea" id="RHEA-COMP:9863"/>
        <dbReference type="Rhea" id="RHEA-COMP:11604"/>
        <dbReference type="ChEBI" id="CHEBI:15378"/>
        <dbReference type="ChEBI" id="CHEBI:29999"/>
        <dbReference type="ChEBI" id="CHEBI:30616"/>
        <dbReference type="ChEBI" id="CHEBI:83421"/>
        <dbReference type="ChEBI" id="CHEBI:456216"/>
        <dbReference type="EC" id="2.7.11.1"/>
    </reaction>
</comment>
<comment type="catalytic activity">
    <reaction evidence="7 16">
        <text>L-threonyl-[protein] + ATP = O-phospho-L-threonyl-[protein] + ADP + H(+)</text>
        <dbReference type="Rhea" id="RHEA:46608"/>
        <dbReference type="Rhea" id="RHEA-COMP:11060"/>
        <dbReference type="Rhea" id="RHEA-COMP:11605"/>
        <dbReference type="ChEBI" id="CHEBI:15378"/>
        <dbReference type="ChEBI" id="CHEBI:30013"/>
        <dbReference type="ChEBI" id="CHEBI:30616"/>
        <dbReference type="ChEBI" id="CHEBI:61977"/>
        <dbReference type="ChEBI" id="CHEBI:456216"/>
        <dbReference type="EC" id="2.7.11.1"/>
    </reaction>
</comment>
<comment type="activity regulation">
    <text evidence="13 17 19">Inactivated by the begomovirus AL2 protein or the curtovirus L2 protein (PubMed:12671096). Activated by phosphorylation at Thr-176 by GRIK1/SNAK2 and GRIK2/SNAK1 (PubMed:19339507). Inhibited by trehalose-6-phosphate (PubMed:19193861).</text>
</comment>
<comment type="subunit">
    <text evidence="7 8 9 10 11 12 13 14 15 21 22 23 25 26 27 32 34 35 36 37 38 39">Subunit of a probable heterotrimeric complex consisting of an alpha catalytic (KIN10 or KIN11) subunit, and a beta (KINB) and a gamma (KING or SNF4) non-catalytic regulatory subunits (PubMed:17028154, PubMed:25736509). Interacts with KINB2, KINB3, SNF4 and probably with KINB1 and KING1 (PubMed:10417704, PubMed:10929106, PubMed:11522840, PubMed:15803412, PubMed:17028154). Interacts with SKP1/ASK1, PAD1 and the N-terminus of PRL1 (PubMed:10220464, PubMed:11387208). Potential subunit of a SCF ubiquitin ligase complex consisting of a SNF1-related protein kinase, SKP1 and CUL1. The association of the SCF complex with the proteasome may be mediated by PAD1 and seems to be inhibited by the interaction with PRL1 (PubMed:11387208). Interacts with DSP4 (PubMed:12148529). Interacts with the begomovirus AL2 protein and the curtovirus L2 protein (PubMed:12671096). Interacts with ATAF1 (Ref.20). Interacts with CIPK14 (PubMed:25058458). Interacts with FLZ proteins through their FLZ-type zinc finger domains (PubMed:24600465, PubMed:29945970). Interacts with GEBP/STKR1 (PubMed:24600465, PubMed:29192025). Interacts with REM4.1 and REM4.2 (PubMed:25289013). Interacts with ADK2 (PubMed:24498147). Interacts with IDD8 (PubMed:25929516). Interacts with FLZ3, FLZ9, TCP3, TCP13, HB21/ZHD3 and HB23/ZHD10 (Ref.32). Interacts with WRI1 (PubMed:28314829). Interacts with IPK2b (PubMed:29216370). Interacts with FLZ6 and FLZ10 (PubMed:29406622).</text>
</comment>
<comment type="interaction">
    <interactant intactId="EBI-307202">
        <id>P92958</id>
    </interactant>
    <interactant intactId="EBI-307215">
        <id>Q9FEB5</id>
        <label>DSP4</label>
    </interactant>
    <organismsDiffer>false</organismsDiffer>
    <experiments>2</experiments>
</comment>
<comment type="interaction">
    <interactant intactId="EBI-307202">
        <id>P92958</id>
    </interactant>
    <interactant intactId="EBI-2042415">
        <id>Q84VQ1</id>
        <label>KINB1</label>
    </interactant>
    <organismsDiffer>false</organismsDiffer>
    <experiments>9</experiments>
</comment>
<comment type="interaction">
    <interactant intactId="EBI-307202">
        <id>P92958</id>
    </interactant>
    <interactant intactId="EBI-2042436">
        <id>Q9SCY5</id>
        <label>KINB2</label>
    </interactant>
    <organismsDiffer>false</organismsDiffer>
    <experiments>10</experiments>
</comment>
<comment type="interaction">
    <interactant intactId="EBI-307202">
        <id>P92958</id>
    </interactant>
    <interactant intactId="EBI-1382964">
        <id>Q42384</id>
        <label>PRL1</label>
    </interactant>
    <organismsDiffer>false</organismsDiffer>
    <experiments>2</experiments>
</comment>
<comment type="interaction">
    <interactant intactId="EBI-307202">
        <id>P92958</id>
    </interactant>
    <interactant intactId="EBI-2360649">
        <id>Q944A6</id>
        <label>SNF4</label>
    </interactant>
    <organismsDiffer>false</organismsDiffer>
    <experiments>9</experiments>
</comment>
<comment type="interaction">
    <interactant intactId="EBI-307202">
        <id>P92958</id>
    </interactant>
    <interactant intactId="EBI-4424568">
        <id>Q9LVG2</id>
        <label>TOE2</label>
    </interactant>
    <organismsDiffer>false</organismsDiffer>
    <experiments>2</experiments>
</comment>
<comment type="subcellular location">
    <subcellularLocation>
        <location evidence="18 24">Plastid</location>
        <location evidence="18 24">Chloroplast</location>
    </subcellularLocation>
    <subcellularLocation>
        <location evidence="18 21 24">Cytoplasm</location>
    </subcellularLocation>
    <subcellularLocation>
        <location evidence="36">Endoplasmic reticulum</location>
    </subcellularLocation>
    <text evidence="36">Co-localized with ER marker when associated with FLZ6 or FLZ10.</text>
</comment>
<comment type="alternative products">
    <event type="alternative splicing"/>
    <isoform>
        <id>P92958-1</id>
        <name>1</name>
        <sequence type="displayed"/>
    </isoform>
    <isoform>
        <id>P92958-2</id>
        <name>2</name>
        <sequence type="described" ref="VSP_034567 VSP_034568"/>
    </isoform>
</comment>
<comment type="tissue specificity">
    <text evidence="8 24">Expressed in roots, shoots, flower buds, flowers, siliques and leaves (PubMed:10417704). Restrictly expressed to the base of the leaf, the vascular tissue, and the hydathodes (PubMed:25071807).</text>
</comment>
<comment type="induction">
    <text evidence="7 18 20 24 30">Induced by sucrose (PubMed:10220464). Down-regulated under phosphate starvation (at the protein level) (PubMed:19211700). Up-regulated by beta-aminobutyric acid (BABA) (PubMed:20484986). Induced after infection by the effector avirulence protein AvrRpm1 from P.syringae (PubMed:27337039). Induced by trehalose (PubMed:25071807).</text>
</comment>
<comment type="domain">
    <text evidence="1">The regulatory domain (RD) contains the auto-inhibitory domain (AID) that inhibits kinase activity of the protein kinase domain (KD).</text>
</comment>
<comment type="domain">
    <text evidence="1">The PPI motif mediates the interaction with the ABI (abscisic acid-insensitive) phosphatases.</text>
</comment>
<comment type="PTM">
    <text evidence="28">Sumoylated by SIZ1.</text>
</comment>
<comment type="PTM">
    <text evidence="7 19 29">Phosphorylated at Thr-176 under submergence (PubMed:27029354). Autophosphorylated (PubMed:10220464). Phosphorylated at Thr-176 by GRIK1/SNAK2 and GRIK2/SNAK1 (PubMed:19339507).</text>
</comment>
<comment type="disruption phenotype">
    <text evidence="33">Increased seed abortion.</text>
</comment>
<comment type="similarity">
    <text evidence="41">Belongs to the protein kinase superfamily. CAMK Ser/Thr protein kinase family. SNF1 subfamily.</text>
</comment>
<organism>
    <name type="scientific">Arabidopsis thaliana</name>
    <name type="common">Mouse-ear cress</name>
    <dbReference type="NCBI Taxonomy" id="3702"/>
    <lineage>
        <taxon>Eukaryota</taxon>
        <taxon>Viridiplantae</taxon>
        <taxon>Streptophyta</taxon>
        <taxon>Embryophyta</taxon>
        <taxon>Tracheophyta</taxon>
        <taxon>Spermatophyta</taxon>
        <taxon>Magnoliopsida</taxon>
        <taxon>eudicotyledons</taxon>
        <taxon>Gunneridae</taxon>
        <taxon>Pentapetalae</taxon>
        <taxon>rosids</taxon>
        <taxon>malvids</taxon>
        <taxon>Brassicales</taxon>
        <taxon>Brassicaceae</taxon>
        <taxon>Camelineae</taxon>
        <taxon>Arabidopsis</taxon>
    </lineage>
</organism>
<proteinExistence type="evidence at protein level"/>
<dbReference type="EC" id="2.7.11.1" evidence="7 16"/>
<dbReference type="EMBL" id="X94755">
    <property type="protein sequence ID" value="CAA64382.1"/>
    <property type="molecule type" value="mRNA"/>
</dbReference>
<dbReference type="EMBL" id="X99279">
    <property type="protein sequence ID" value="CAA67671.1"/>
    <property type="molecule type" value="mRNA"/>
</dbReference>
<dbReference type="EMBL" id="DQ778956">
    <property type="protein sequence ID" value="ABH11526.1"/>
    <property type="molecule type" value="mRNA"/>
</dbReference>
<dbReference type="EMBL" id="AB018121">
    <property type="protein sequence ID" value="BAB01993.1"/>
    <property type="molecule type" value="Genomic_DNA"/>
</dbReference>
<dbReference type="EMBL" id="CP002686">
    <property type="protein sequence ID" value="AEE77542.1"/>
    <property type="molecule type" value="Genomic_DNA"/>
</dbReference>
<dbReference type="EMBL" id="CP002686">
    <property type="protein sequence ID" value="AEE77543.1"/>
    <property type="molecule type" value="Genomic_DNA"/>
</dbReference>
<dbReference type="EMBL" id="CP002686">
    <property type="protein sequence ID" value="AEE77544.1"/>
    <property type="molecule type" value="Genomic_DNA"/>
</dbReference>
<dbReference type="EMBL" id="AY070468">
    <property type="protein sequence ID" value="AAL49934.1"/>
    <property type="molecule type" value="mRNA"/>
</dbReference>
<dbReference type="EMBL" id="AY149927">
    <property type="protein sequence ID" value="AAN31081.1"/>
    <property type="molecule type" value="mRNA"/>
</dbReference>
<dbReference type="PIR" id="T52633">
    <property type="entry name" value="T52633"/>
</dbReference>
<dbReference type="RefSeq" id="NP_566843.1">
    <molecule id="P92958-1"/>
    <property type="nucleotide sequence ID" value="NM_113839.4"/>
</dbReference>
<dbReference type="RefSeq" id="NP_974374.1">
    <molecule id="P92958-1"/>
    <property type="nucleotide sequence ID" value="NM_202645.3"/>
</dbReference>
<dbReference type="RefSeq" id="NP_974375.1">
    <molecule id="P92958-2"/>
    <property type="nucleotide sequence ID" value="NM_202646.1"/>
</dbReference>
<dbReference type="SMR" id="P92958"/>
<dbReference type="BioGRID" id="7895">
    <property type="interactions" value="85"/>
</dbReference>
<dbReference type="FunCoup" id="P92958">
    <property type="interactions" value="3646"/>
</dbReference>
<dbReference type="IntAct" id="P92958">
    <property type="interactions" value="40"/>
</dbReference>
<dbReference type="STRING" id="3702.P92958"/>
<dbReference type="iPTMnet" id="P92958"/>
<dbReference type="PaxDb" id="3702-AT3G29160.1"/>
<dbReference type="ProteomicsDB" id="237086">
    <molecule id="P92958-1"/>
</dbReference>
<dbReference type="EnsemblPlants" id="AT3G29160.1">
    <molecule id="P92958-1"/>
    <property type="protein sequence ID" value="AT3G29160.1"/>
    <property type="gene ID" value="AT3G29160"/>
</dbReference>
<dbReference type="EnsemblPlants" id="AT3G29160.2">
    <molecule id="P92958-1"/>
    <property type="protein sequence ID" value="AT3G29160.2"/>
    <property type="gene ID" value="AT3G29160"/>
</dbReference>
<dbReference type="EnsemblPlants" id="AT3G29160.3">
    <molecule id="P92958-2"/>
    <property type="protein sequence ID" value="AT3G29160.3"/>
    <property type="gene ID" value="AT3G29160"/>
</dbReference>
<dbReference type="GeneID" id="822566"/>
<dbReference type="Gramene" id="AT3G29160.1">
    <molecule id="P92958-1"/>
    <property type="protein sequence ID" value="AT3G29160.1"/>
    <property type="gene ID" value="AT3G29160"/>
</dbReference>
<dbReference type="Gramene" id="AT3G29160.2">
    <molecule id="P92958-1"/>
    <property type="protein sequence ID" value="AT3G29160.2"/>
    <property type="gene ID" value="AT3G29160"/>
</dbReference>
<dbReference type="Gramene" id="AT3G29160.3">
    <molecule id="P92958-2"/>
    <property type="protein sequence ID" value="AT3G29160.3"/>
    <property type="gene ID" value="AT3G29160"/>
</dbReference>
<dbReference type="KEGG" id="ath:AT3G29160"/>
<dbReference type="Araport" id="AT3G29160"/>
<dbReference type="TAIR" id="AT3G29160">
    <property type="gene designation" value="KIN11"/>
</dbReference>
<dbReference type="eggNOG" id="KOG0583">
    <property type="taxonomic scope" value="Eukaryota"/>
</dbReference>
<dbReference type="HOGENOM" id="CLU_000288_59_3_1"/>
<dbReference type="InParanoid" id="P92958"/>
<dbReference type="OMA" id="VCENFEC"/>
<dbReference type="OrthoDB" id="193931at2759"/>
<dbReference type="PhylomeDB" id="P92958"/>
<dbReference type="PRO" id="PR:P92958"/>
<dbReference type="Proteomes" id="UP000006548">
    <property type="component" value="Chromosome 3"/>
</dbReference>
<dbReference type="ExpressionAtlas" id="P92958">
    <property type="expression patterns" value="baseline and differential"/>
</dbReference>
<dbReference type="GO" id="GO:0009507">
    <property type="term" value="C:chloroplast"/>
    <property type="evidence" value="ECO:0000314"/>
    <property type="project" value="UniProtKB"/>
</dbReference>
<dbReference type="GO" id="GO:0005737">
    <property type="term" value="C:cytoplasm"/>
    <property type="evidence" value="ECO:0000314"/>
    <property type="project" value="UniProtKB"/>
</dbReference>
<dbReference type="GO" id="GO:0005783">
    <property type="term" value="C:endoplasmic reticulum"/>
    <property type="evidence" value="ECO:0007669"/>
    <property type="project" value="UniProtKB-SubCell"/>
</dbReference>
<dbReference type="GO" id="GO:0005634">
    <property type="term" value="C:nucleus"/>
    <property type="evidence" value="ECO:0000314"/>
    <property type="project" value="UniProtKB"/>
</dbReference>
<dbReference type="GO" id="GO:0005524">
    <property type="term" value="F:ATP binding"/>
    <property type="evidence" value="ECO:0007669"/>
    <property type="project" value="UniProtKB-KW"/>
</dbReference>
<dbReference type="GO" id="GO:0019900">
    <property type="term" value="F:kinase binding"/>
    <property type="evidence" value="ECO:0000353"/>
    <property type="project" value="UniProtKB"/>
</dbReference>
<dbReference type="GO" id="GO:0004672">
    <property type="term" value="F:protein kinase activity"/>
    <property type="evidence" value="ECO:0000314"/>
    <property type="project" value="TAIR"/>
</dbReference>
<dbReference type="GO" id="GO:0106310">
    <property type="term" value="F:protein serine kinase activity"/>
    <property type="evidence" value="ECO:0007669"/>
    <property type="project" value="RHEA"/>
</dbReference>
<dbReference type="GO" id="GO:0004674">
    <property type="term" value="F:protein serine/threonine kinase activity"/>
    <property type="evidence" value="ECO:0000314"/>
    <property type="project" value="TAIR"/>
</dbReference>
<dbReference type="GO" id="GO:0006633">
    <property type="term" value="P:fatty acid biosynthetic process"/>
    <property type="evidence" value="ECO:0007669"/>
    <property type="project" value="UniProtKB-KW"/>
</dbReference>
<dbReference type="GO" id="GO:0042128">
    <property type="term" value="P:nitrate assimilation"/>
    <property type="evidence" value="ECO:0007669"/>
    <property type="project" value="UniProtKB-KW"/>
</dbReference>
<dbReference type="GO" id="GO:0046777">
    <property type="term" value="P:protein autophosphorylation"/>
    <property type="evidence" value="ECO:0000314"/>
    <property type="project" value="TAIR"/>
</dbReference>
<dbReference type="GO" id="GO:0006468">
    <property type="term" value="P:protein phosphorylation"/>
    <property type="evidence" value="ECO:0000314"/>
    <property type="project" value="TAIR"/>
</dbReference>
<dbReference type="GO" id="GO:0050688">
    <property type="term" value="P:regulation of defense response to virus"/>
    <property type="evidence" value="ECO:0007669"/>
    <property type="project" value="UniProtKB-KW"/>
</dbReference>
<dbReference type="GO" id="GO:0010353">
    <property type="term" value="P:response to trehalose"/>
    <property type="evidence" value="ECO:0000270"/>
    <property type="project" value="UniProtKB"/>
</dbReference>
<dbReference type="CDD" id="cd12122">
    <property type="entry name" value="AMPKA_C"/>
    <property type="match status" value="1"/>
</dbReference>
<dbReference type="CDD" id="cd14079">
    <property type="entry name" value="STKc_AMPK_alpha"/>
    <property type="match status" value="1"/>
</dbReference>
<dbReference type="CDD" id="cd14335">
    <property type="entry name" value="UBA_SnRK1_plant"/>
    <property type="match status" value="1"/>
</dbReference>
<dbReference type="FunFam" id="1.10.510.10:FF:000204">
    <property type="entry name" value="Non-specific serine/threonine protein kinase"/>
    <property type="match status" value="1"/>
</dbReference>
<dbReference type="FunFam" id="3.30.200.20:FF:000003">
    <property type="entry name" value="Non-specific serine/threonine protein kinase"/>
    <property type="match status" value="1"/>
</dbReference>
<dbReference type="FunFam" id="3.30.310.80:FF:000006">
    <property type="entry name" value="Non-specific serine/threonine protein kinase"/>
    <property type="match status" value="1"/>
</dbReference>
<dbReference type="Gene3D" id="3.30.310.80">
    <property type="entry name" value="Kinase associated domain 1, KA1"/>
    <property type="match status" value="1"/>
</dbReference>
<dbReference type="Gene3D" id="1.10.510.10">
    <property type="entry name" value="Transferase(Phosphotransferase) domain 1"/>
    <property type="match status" value="1"/>
</dbReference>
<dbReference type="InterPro" id="IPR028375">
    <property type="entry name" value="KA1/Ssp2_C"/>
</dbReference>
<dbReference type="InterPro" id="IPR001772">
    <property type="entry name" value="KA1_dom"/>
</dbReference>
<dbReference type="InterPro" id="IPR011009">
    <property type="entry name" value="Kinase-like_dom_sf"/>
</dbReference>
<dbReference type="InterPro" id="IPR000719">
    <property type="entry name" value="Prot_kinase_dom"/>
</dbReference>
<dbReference type="InterPro" id="IPR017441">
    <property type="entry name" value="Protein_kinase_ATP_BS"/>
</dbReference>
<dbReference type="InterPro" id="IPR008271">
    <property type="entry name" value="Ser/Thr_kinase_AS"/>
</dbReference>
<dbReference type="InterPro" id="IPR015940">
    <property type="entry name" value="UBA"/>
</dbReference>
<dbReference type="InterPro" id="IPR009060">
    <property type="entry name" value="UBA-like_sf"/>
</dbReference>
<dbReference type="PANTHER" id="PTHR24346:SF82">
    <property type="entry name" value="KP78A-RELATED"/>
    <property type="match status" value="1"/>
</dbReference>
<dbReference type="PANTHER" id="PTHR24346">
    <property type="entry name" value="MAP/MICROTUBULE AFFINITY-REGULATING KINASE"/>
    <property type="match status" value="1"/>
</dbReference>
<dbReference type="Pfam" id="PF02149">
    <property type="entry name" value="KA1"/>
    <property type="match status" value="1"/>
</dbReference>
<dbReference type="Pfam" id="PF00069">
    <property type="entry name" value="Pkinase"/>
    <property type="match status" value="1"/>
</dbReference>
<dbReference type="Pfam" id="PF00627">
    <property type="entry name" value="UBA"/>
    <property type="match status" value="1"/>
</dbReference>
<dbReference type="SMART" id="SM00220">
    <property type="entry name" value="S_TKc"/>
    <property type="match status" value="1"/>
</dbReference>
<dbReference type="SMART" id="SM00165">
    <property type="entry name" value="UBA"/>
    <property type="match status" value="1"/>
</dbReference>
<dbReference type="SUPFAM" id="SSF103243">
    <property type="entry name" value="KA1-like"/>
    <property type="match status" value="1"/>
</dbReference>
<dbReference type="SUPFAM" id="SSF56112">
    <property type="entry name" value="Protein kinase-like (PK-like)"/>
    <property type="match status" value="1"/>
</dbReference>
<dbReference type="SUPFAM" id="SSF46934">
    <property type="entry name" value="UBA-like"/>
    <property type="match status" value="1"/>
</dbReference>
<dbReference type="PROSITE" id="PS50032">
    <property type="entry name" value="KA1"/>
    <property type="match status" value="1"/>
</dbReference>
<dbReference type="PROSITE" id="PS00107">
    <property type="entry name" value="PROTEIN_KINASE_ATP"/>
    <property type="match status" value="1"/>
</dbReference>
<dbReference type="PROSITE" id="PS50011">
    <property type="entry name" value="PROTEIN_KINASE_DOM"/>
    <property type="match status" value="1"/>
</dbReference>
<dbReference type="PROSITE" id="PS00108">
    <property type="entry name" value="PROTEIN_KINASE_ST"/>
    <property type="match status" value="1"/>
</dbReference>
<dbReference type="PROSITE" id="PS50030">
    <property type="entry name" value="UBA"/>
    <property type="match status" value="1"/>
</dbReference>
<gene>
    <name evidence="41" type="primary">KIN11</name>
    <name evidence="45" type="synonym">AKIN11</name>
    <name evidence="43" type="synonym">SNR1</name>
    <name evidence="40" type="synonym">SNRK1.2</name>
    <name evidence="42" type="ordered locus">At3g29160</name>
    <name evidence="44" type="ORF">MXE2.16</name>
</gene>
<feature type="chain" id="PRO_0000086129" description="SNF1-related protein kinase catalytic subunit alpha KIN11">
    <location>
        <begin position="1"/>
        <end position="512"/>
    </location>
</feature>
<feature type="domain" description="Protein kinase" evidence="3">
    <location>
        <begin position="20"/>
        <end position="272"/>
    </location>
</feature>
<feature type="domain" description="UBA" evidence="4">
    <location>
        <begin position="293"/>
        <end position="333"/>
    </location>
</feature>
<feature type="domain" description="KA1" evidence="5">
    <location>
        <begin position="463"/>
        <end position="511"/>
    </location>
</feature>
<feature type="region of interest" description="Auto-inhibitory domain (AID)" evidence="1">
    <location>
        <begin position="291"/>
        <end position="391"/>
    </location>
</feature>
<feature type="region of interest" description="Regulatory domain (RD)" evidence="1">
    <location>
        <begin position="295"/>
        <end position="512"/>
    </location>
</feature>
<feature type="region of interest" description="PPI" evidence="1">
    <location>
        <begin position="392"/>
        <end position="512"/>
    </location>
</feature>
<feature type="region of interest" description="Interaction with PAD1 and SKP1" evidence="10">
    <location>
        <begin position="399"/>
        <end position="512"/>
    </location>
</feature>
<feature type="active site" description="Proton acceptor" evidence="3 6">
    <location>
        <position position="143"/>
    </location>
</feature>
<feature type="binding site" evidence="3">
    <location>
        <begin position="26"/>
        <end position="34"/>
    </location>
    <ligand>
        <name>ATP</name>
        <dbReference type="ChEBI" id="CHEBI:30616"/>
    </ligand>
</feature>
<feature type="binding site" evidence="3 16">
    <location>
        <position position="49"/>
    </location>
    <ligand>
        <name>ATP</name>
        <dbReference type="ChEBI" id="CHEBI:30616"/>
    </ligand>
</feature>
<feature type="modified residue" description="Phosphoserine" evidence="2">
    <location>
        <position position="165"/>
    </location>
</feature>
<feature type="modified residue" description="Phosphothreonine; by GRIK1 or GRIK2" evidence="19 29 31">
    <location>
        <position position="176"/>
    </location>
</feature>
<feature type="splice variant" id="VSP_034567" description="In isoform 2." evidence="41">
    <original>DSGSNPMR</original>
    <variation>WFQSYAHT</variation>
    <location>
        <begin position="352"/>
        <end position="359"/>
    </location>
</feature>
<feature type="splice variant" id="VSP_034568" description="In isoform 2." evidence="41">
    <location>
        <begin position="360"/>
        <end position="512"/>
    </location>
</feature>
<feature type="mutagenesis site" description="Abolishes kinase activity." evidence="16">
    <original>K</original>
    <variation>M</variation>
    <location>
        <position position="49"/>
    </location>
</feature>
<feature type="sequence conflict" description="In Ref. 1; CAA64382." evidence="41" ref="1">
    <original>A</original>
    <variation>T</variation>
    <location>
        <position position="291"/>
    </location>
</feature>
<evidence type="ECO:0000250" key="1">
    <source>
        <dbReference type="UniProtKB" id="Q38997"/>
    </source>
</evidence>
<evidence type="ECO:0000250" key="2">
    <source>
        <dbReference type="UniProtKB" id="Q93V58"/>
    </source>
</evidence>
<evidence type="ECO:0000255" key="3">
    <source>
        <dbReference type="PROSITE-ProRule" id="PRU00159"/>
    </source>
</evidence>
<evidence type="ECO:0000255" key="4">
    <source>
        <dbReference type="PROSITE-ProRule" id="PRU00212"/>
    </source>
</evidence>
<evidence type="ECO:0000255" key="5">
    <source>
        <dbReference type="PROSITE-ProRule" id="PRU00565"/>
    </source>
</evidence>
<evidence type="ECO:0000255" key="6">
    <source>
        <dbReference type="PROSITE-ProRule" id="PRU10027"/>
    </source>
</evidence>
<evidence type="ECO:0000269" key="7">
    <source>
    </source>
</evidence>
<evidence type="ECO:0000269" key="8">
    <source>
    </source>
</evidence>
<evidence type="ECO:0000269" key="9">
    <source>
    </source>
</evidence>
<evidence type="ECO:0000269" key="10">
    <source>
    </source>
</evidence>
<evidence type="ECO:0000269" key="11">
    <source>
    </source>
</evidence>
<evidence type="ECO:0000269" key="12">
    <source>
    </source>
</evidence>
<evidence type="ECO:0000269" key="13">
    <source>
    </source>
</evidence>
<evidence type="ECO:0000269" key="14">
    <source>
    </source>
</evidence>
<evidence type="ECO:0000269" key="15">
    <source>
    </source>
</evidence>
<evidence type="ECO:0000269" key="16">
    <source>
    </source>
</evidence>
<evidence type="ECO:0000269" key="17">
    <source>
    </source>
</evidence>
<evidence type="ECO:0000269" key="18">
    <source>
    </source>
</evidence>
<evidence type="ECO:0000269" key="19">
    <source>
    </source>
</evidence>
<evidence type="ECO:0000269" key="20">
    <source>
    </source>
</evidence>
<evidence type="ECO:0000269" key="21">
    <source>
    </source>
</evidence>
<evidence type="ECO:0000269" key="22">
    <source>
    </source>
</evidence>
<evidence type="ECO:0000269" key="23">
    <source>
    </source>
</evidence>
<evidence type="ECO:0000269" key="24">
    <source>
    </source>
</evidence>
<evidence type="ECO:0000269" key="25">
    <source>
    </source>
</evidence>
<evidence type="ECO:0000269" key="26">
    <source>
    </source>
</evidence>
<evidence type="ECO:0000269" key="27">
    <source>
    </source>
</evidence>
<evidence type="ECO:0000269" key="28">
    <source>
    </source>
</evidence>
<evidence type="ECO:0000269" key="29">
    <source>
    </source>
</evidence>
<evidence type="ECO:0000269" key="30">
    <source>
    </source>
</evidence>
<evidence type="ECO:0000269" key="31">
    <source>
    </source>
</evidence>
<evidence type="ECO:0000269" key="32">
    <source>
    </source>
</evidence>
<evidence type="ECO:0000269" key="33">
    <source>
    </source>
</evidence>
<evidence type="ECO:0000269" key="34">
    <source>
    </source>
</evidence>
<evidence type="ECO:0000269" key="35">
    <source>
    </source>
</evidence>
<evidence type="ECO:0000269" key="36">
    <source>
    </source>
</evidence>
<evidence type="ECO:0000269" key="37">
    <source>
    </source>
</evidence>
<evidence type="ECO:0000269" key="38">
    <source ref="20"/>
</evidence>
<evidence type="ECO:0000269" key="39">
    <source ref="32"/>
</evidence>
<evidence type="ECO:0000303" key="40">
    <source>
    </source>
</evidence>
<evidence type="ECO:0000305" key="41"/>
<evidence type="ECO:0000312" key="42">
    <source>
        <dbReference type="Araport" id="AT3G29160"/>
    </source>
</evidence>
<evidence type="ECO:0000312" key="43">
    <source>
        <dbReference type="EMBL" id="ABH11526.1"/>
    </source>
</evidence>
<evidence type="ECO:0000312" key="44">
    <source>
        <dbReference type="EMBL" id="BAB01993.1"/>
    </source>
</evidence>
<evidence type="ECO:0000312" key="45">
    <source>
        <dbReference type="EMBL" id="CAA67671.1"/>
    </source>
</evidence>